<protein>
    <recommendedName>
        <fullName evidence="1">Iron-sulfur cluster repair protein YtfE</fullName>
    </recommendedName>
</protein>
<proteinExistence type="inferred from homology"/>
<reference key="1">
    <citation type="journal article" date="2009" name="PLoS Genet.">
        <title>Organised genome dynamics in the Escherichia coli species results in highly diverse adaptive paths.</title>
        <authorList>
            <person name="Touchon M."/>
            <person name="Hoede C."/>
            <person name="Tenaillon O."/>
            <person name="Barbe V."/>
            <person name="Baeriswyl S."/>
            <person name="Bidet P."/>
            <person name="Bingen E."/>
            <person name="Bonacorsi S."/>
            <person name="Bouchier C."/>
            <person name="Bouvet O."/>
            <person name="Calteau A."/>
            <person name="Chiapello H."/>
            <person name="Clermont O."/>
            <person name="Cruveiller S."/>
            <person name="Danchin A."/>
            <person name="Diard M."/>
            <person name="Dossat C."/>
            <person name="Karoui M.E."/>
            <person name="Frapy E."/>
            <person name="Garry L."/>
            <person name="Ghigo J.M."/>
            <person name="Gilles A.M."/>
            <person name="Johnson J."/>
            <person name="Le Bouguenec C."/>
            <person name="Lescat M."/>
            <person name="Mangenot S."/>
            <person name="Martinez-Jehanne V."/>
            <person name="Matic I."/>
            <person name="Nassif X."/>
            <person name="Oztas S."/>
            <person name="Petit M.A."/>
            <person name="Pichon C."/>
            <person name="Rouy Z."/>
            <person name="Ruf C.S."/>
            <person name="Schneider D."/>
            <person name="Tourret J."/>
            <person name="Vacherie B."/>
            <person name="Vallenet D."/>
            <person name="Medigue C."/>
            <person name="Rocha E.P.C."/>
            <person name="Denamur E."/>
        </authorList>
    </citation>
    <scope>NUCLEOTIDE SEQUENCE [LARGE SCALE GENOMIC DNA]</scope>
    <source>
        <strain>IAI39 / ExPEC</strain>
    </source>
</reference>
<comment type="function">
    <text evidence="1">Di-iron-containing protein involved in the repair of iron-sulfur clusters damaged by oxidative and nitrosative stress conditions.</text>
</comment>
<comment type="subunit">
    <text evidence="1">Homodimer.</text>
</comment>
<comment type="subcellular location">
    <subcellularLocation>
        <location evidence="1">Cytoplasm</location>
    </subcellularLocation>
</comment>
<comment type="similarity">
    <text evidence="1">Belongs to the RIC family. YtfE subfamily.</text>
</comment>
<feature type="chain" id="PRO_1000148174" description="Iron-sulfur cluster repair protein YtfE">
    <location>
        <begin position="1"/>
        <end position="220"/>
    </location>
</feature>
<accession>B7NUC3</accession>
<name>YTFE_ECO7I</name>
<dbReference type="EMBL" id="CU928164">
    <property type="protein sequence ID" value="CAR20779.1"/>
    <property type="molecule type" value="Genomic_DNA"/>
</dbReference>
<dbReference type="RefSeq" id="WP_000331451.1">
    <property type="nucleotide sequence ID" value="NC_011750.1"/>
</dbReference>
<dbReference type="RefSeq" id="YP_002410542.1">
    <property type="nucleotide sequence ID" value="NC_011750.1"/>
</dbReference>
<dbReference type="SMR" id="B7NUC3"/>
<dbReference type="STRING" id="585057.ECIAI39_4681"/>
<dbReference type="GeneID" id="89519204"/>
<dbReference type="KEGG" id="ect:ECIAI39_4681"/>
<dbReference type="PATRIC" id="fig|585057.6.peg.4829"/>
<dbReference type="HOGENOM" id="CLU_076075_2_0_6"/>
<dbReference type="Proteomes" id="UP000000749">
    <property type="component" value="Chromosome"/>
</dbReference>
<dbReference type="GO" id="GO:0005737">
    <property type="term" value="C:cytoplasm"/>
    <property type="evidence" value="ECO:0007669"/>
    <property type="project" value="UniProtKB-SubCell"/>
</dbReference>
<dbReference type="GO" id="GO:0046872">
    <property type="term" value="F:metal ion binding"/>
    <property type="evidence" value="ECO:0007669"/>
    <property type="project" value="UniProtKB-KW"/>
</dbReference>
<dbReference type="GO" id="GO:0030091">
    <property type="term" value="P:protein repair"/>
    <property type="evidence" value="ECO:0007669"/>
    <property type="project" value="UniProtKB-UniRule"/>
</dbReference>
<dbReference type="GO" id="GO:0051409">
    <property type="term" value="P:response to nitrosative stress"/>
    <property type="evidence" value="ECO:0007669"/>
    <property type="project" value="UniProtKB-UniRule"/>
</dbReference>
<dbReference type="GO" id="GO:0006979">
    <property type="term" value="P:response to oxidative stress"/>
    <property type="evidence" value="ECO:0007669"/>
    <property type="project" value="UniProtKB-UniRule"/>
</dbReference>
<dbReference type="CDD" id="cd12108">
    <property type="entry name" value="Hr-like"/>
    <property type="match status" value="1"/>
</dbReference>
<dbReference type="FunFam" id="1.20.120.520:FF:000001">
    <property type="entry name" value="Iron-sulfur cluster repair protein YtfE"/>
    <property type="match status" value="1"/>
</dbReference>
<dbReference type="Gene3D" id="1.20.120.520">
    <property type="entry name" value="nmb1532 protein domain like"/>
    <property type="match status" value="1"/>
</dbReference>
<dbReference type="HAMAP" id="MF_01606">
    <property type="entry name" value="RIC_YtfE"/>
    <property type="match status" value="1"/>
</dbReference>
<dbReference type="InterPro" id="IPR023742">
    <property type="entry name" value="FeS-repair_YftE"/>
</dbReference>
<dbReference type="InterPro" id="IPR012312">
    <property type="entry name" value="Hemerythrin-like"/>
</dbReference>
<dbReference type="InterPro" id="IPR019903">
    <property type="entry name" value="RIC_family"/>
</dbReference>
<dbReference type="NCBIfam" id="TIGR03652">
    <property type="entry name" value="FeS_repair_RIC"/>
    <property type="match status" value="1"/>
</dbReference>
<dbReference type="NCBIfam" id="NF008221">
    <property type="entry name" value="PRK10992.1"/>
    <property type="match status" value="1"/>
</dbReference>
<dbReference type="PANTHER" id="PTHR36438">
    <property type="entry name" value="IRON-SULFUR CLUSTER REPAIR PROTEIN YTFE"/>
    <property type="match status" value="1"/>
</dbReference>
<dbReference type="PANTHER" id="PTHR36438:SF1">
    <property type="entry name" value="IRON-SULFUR CLUSTER REPAIR PROTEIN YTFE"/>
    <property type="match status" value="1"/>
</dbReference>
<dbReference type="Pfam" id="PF01814">
    <property type="entry name" value="Hemerythrin"/>
    <property type="match status" value="1"/>
</dbReference>
<dbReference type="Pfam" id="PF04405">
    <property type="entry name" value="ScdA_N"/>
    <property type="match status" value="1"/>
</dbReference>
<keyword id="KW-0963">Cytoplasm</keyword>
<keyword id="KW-0408">Iron</keyword>
<keyword id="KW-0479">Metal-binding</keyword>
<keyword id="KW-0346">Stress response</keyword>
<gene>
    <name evidence="1" type="primary">ytfE</name>
    <name type="ordered locus">ECIAI39_4681</name>
</gene>
<sequence>MAYRDQPLGELALSIPRASALFRKYDMDYCCGGKQTLARAAARKELDVDVIEAELAKLAEQPIEKDWRSAPLAEIIDHIIVRYHDRHREQLPELILQATKVERVHADKPSVPKGLTKYLTMLHEELSSHMMKEEQILFPMIKQGMGSQAMGPISVMESEHDEAGELLEVIKHTTNNVTPPPEACTTWKAMYNGINELIDDLMEHISLENNVLFPRALAGE</sequence>
<organism>
    <name type="scientific">Escherichia coli O7:K1 (strain IAI39 / ExPEC)</name>
    <dbReference type="NCBI Taxonomy" id="585057"/>
    <lineage>
        <taxon>Bacteria</taxon>
        <taxon>Pseudomonadati</taxon>
        <taxon>Pseudomonadota</taxon>
        <taxon>Gammaproteobacteria</taxon>
        <taxon>Enterobacterales</taxon>
        <taxon>Enterobacteriaceae</taxon>
        <taxon>Escherichia</taxon>
    </lineage>
</organism>
<evidence type="ECO:0000255" key="1">
    <source>
        <dbReference type="HAMAP-Rule" id="MF_01606"/>
    </source>
</evidence>